<reference key="1">
    <citation type="submission" date="2007-03" db="EMBL/GenBank/DDBJ databases">
        <title>Sequencing analysis of Aethionema coridifolium chloroplast DNA.</title>
        <authorList>
            <person name="Hosouchi T."/>
            <person name="Tsuruoka H."/>
            <person name="Kotani H."/>
        </authorList>
    </citation>
    <scope>NUCLEOTIDE SEQUENCE [LARGE SCALE GENOMIC DNA]</scope>
</reference>
<evidence type="ECO:0000250" key="1">
    <source>
        <dbReference type="UniProtKB" id="P56778"/>
    </source>
</evidence>
<evidence type="ECO:0000255" key="2">
    <source>
        <dbReference type="HAMAP-Rule" id="MF_01496"/>
    </source>
</evidence>
<name>PSBC_AETCO</name>
<comment type="function">
    <text evidence="2">One of the components of the core complex of photosystem II (PSII). It binds chlorophyll and helps catalyze the primary light-induced photochemical processes of PSII. PSII is a light-driven water:plastoquinone oxidoreductase, using light energy to abstract electrons from H(2)O, generating O(2) and a proton gradient subsequently used for ATP formation.</text>
</comment>
<comment type="cofactor">
    <text evidence="2">Binds multiple chlorophylls and provides some of the ligands for the Ca-4Mn-5O cluster of the oxygen-evolving complex. It may also provide a ligand for a Cl- that is required for oxygen evolution. PSII binds additional chlorophylls, carotenoids and specific lipids.</text>
</comment>
<comment type="subunit">
    <text evidence="2">PSII is composed of 1 copy each of membrane proteins PsbA, PsbB, PsbC, PsbD, PsbE, PsbF, PsbH, PsbI, PsbJ, PsbK, PsbL, PsbM, PsbT, PsbX, PsbY, PsbZ, Psb30/Ycf12, at least 3 peripheral proteins of the oxygen-evolving complex and a large number of cofactors. It forms dimeric complexes.</text>
</comment>
<comment type="subcellular location">
    <subcellularLocation>
        <location evidence="2">Plastid</location>
        <location evidence="2">Chloroplast thylakoid membrane</location>
        <topology evidence="2">Multi-pass membrane protein</topology>
    </subcellularLocation>
</comment>
<comment type="similarity">
    <text evidence="2">Belongs to the PsbB/PsbC family. PsbC subfamily.</text>
</comment>
<gene>
    <name evidence="2" type="primary">psbC</name>
</gene>
<organism>
    <name type="scientific">Aethionema cordifolium</name>
    <name type="common">Lebanon stonecress</name>
    <dbReference type="NCBI Taxonomy" id="434059"/>
    <lineage>
        <taxon>Eukaryota</taxon>
        <taxon>Viridiplantae</taxon>
        <taxon>Streptophyta</taxon>
        <taxon>Embryophyta</taxon>
        <taxon>Tracheophyta</taxon>
        <taxon>Spermatophyta</taxon>
        <taxon>Magnoliopsida</taxon>
        <taxon>eudicotyledons</taxon>
        <taxon>Gunneridae</taxon>
        <taxon>Pentapetalae</taxon>
        <taxon>rosids</taxon>
        <taxon>malvids</taxon>
        <taxon>Brassicales</taxon>
        <taxon>Brassicaceae</taxon>
        <taxon>Aethionemeae</taxon>
        <taxon>Aethionema</taxon>
    </lineage>
</organism>
<accession>A4QJB1</accession>
<feature type="propeptide" id="PRO_0000431106" evidence="2">
    <location>
        <begin position="1"/>
        <end position="14"/>
    </location>
</feature>
<feature type="chain" id="PRO_0000361310" description="Photosystem II CP43 reaction center protein" evidence="2">
    <location>
        <begin position="15"/>
        <end position="473"/>
    </location>
</feature>
<feature type="transmembrane region" description="Helical" evidence="2">
    <location>
        <begin position="69"/>
        <end position="93"/>
    </location>
</feature>
<feature type="transmembrane region" description="Helical" evidence="2">
    <location>
        <begin position="134"/>
        <end position="155"/>
    </location>
</feature>
<feature type="transmembrane region" description="Helical" evidence="2">
    <location>
        <begin position="178"/>
        <end position="200"/>
    </location>
</feature>
<feature type="transmembrane region" description="Helical" evidence="2">
    <location>
        <begin position="255"/>
        <end position="275"/>
    </location>
</feature>
<feature type="transmembrane region" description="Helical" evidence="2">
    <location>
        <begin position="291"/>
        <end position="312"/>
    </location>
</feature>
<feature type="transmembrane region" description="Helical" evidence="2">
    <location>
        <begin position="447"/>
        <end position="471"/>
    </location>
</feature>
<feature type="binding site" evidence="2">
    <location>
        <position position="367"/>
    </location>
    <ligand>
        <name>[CaMn4O5] cluster</name>
        <dbReference type="ChEBI" id="CHEBI:189552"/>
    </ligand>
</feature>
<feature type="modified residue" description="N-acetylthreonine" evidence="1 2">
    <location>
        <position position="15"/>
    </location>
</feature>
<feature type="modified residue" description="Phosphothreonine" evidence="1 2">
    <location>
        <position position="15"/>
    </location>
</feature>
<proteinExistence type="inferred from homology"/>
<protein>
    <recommendedName>
        <fullName evidence="2">Photosystem II CP43 reaction center protein</fullName>
    </recommendedName>
    <alternativeName>
        <fullName evidence="2">PSII 43 kDa protein</fullName>
    </alternativeName>
    <alternativeName>
        <fullName evidence="2">Protein CP-43</fullName>
    </alternativeName>
</protein>
<dbReference type="EMBL" id="AP009366">
    <property type="protein sequence ID" value="BAF49766.1"/>
    <property type="molecule type" value="Genomic_DNA"/>
</dbReference>
<dbReference type="RefSeq" id="YP_001122942.1">
    <property type="nucleotide sequence ID" value="NC_009265.1"/>
</dbReference>
<dbReference type="SMR" id="A4QJB1"/>
<dbReference type="GeneID" id="4968664"/>
<dbReference type="GO" id="GO:0009535">
    <property type="term" value="C:chloroplast thylakoid membrane"/>
    <property type="evidence" value="ECO:0007669"/>
    <property type="project" value="UniProtKB-SubCell"/>
</dbReference>
<dbReference type="GO" id="GO:0009523">
    <property type="term" value="C:photosystem II"/>
    <property type="evidence" value="ECO:0007669"/>
    <property type="project" value="UniProtKB-KW"/>
</dbReference>
<dbReference type="GO" id="GO:0016168">
    <property type="term" value="F:chlorophyll binding"/>
    <property type="evidence" value="ECO:0007669"/>
    <property type="project" value="UniProtKB-UniRule"/>
</dbReference>
<dbReference type="GO" id="GO:0045156">
    <property type="term" value="F:electron transporter, transferring electrons within the cyclic electron transport pathway of photosynthesis activity"/>
    <property type="evidence" value="ECO:0007669"/>
    <property type="project" value="InterPro"/>
</dbReference>
<dbReference type="GO" id="GO:0046872">
    <property type="term" value="F:metal ion binding"/>
    <property type="evidence" value="ECO:0007669"/>
    <property type="project" value="UniProtKB-KW"/>
</dbReference>
<dbReference type="GO" id="GO:0009772">
    <property type="term" value="P:photosynthetic electron transport in photosystem II"/>
    <property type="evidence" value="ECO:0007669"/>
    <property type="project" value="InterPro"/>
</dbReference>
<dbReference type="FunFam" id="1.10.10.670:FF:000001">
    <property type="entry name" value="Photosystem II CP43 reaction center protein"/>
    <property type="match status" value="1"/>
</dbReference>
<dbReference type="Gene3D" id="1.10.10.670">
    <property type="entry name" value="photosystem ii from thermosynechococcus elongatus"/>
    <property type="match status" value="1"/>
</dbReference>
<dbReference type="HAMAP" id="MF_01496">
    <property type="entry name" value="PSII_PsbC_CP43"/>
    <property type="match status" value="1"/>
</dbReference>
<dbReference type="InterPro" id="IPR000932">
    <property type="entry name" value="PS_antenna-like"/>
</dbReference>
<dbReference type="InterPro" id="IPR036001">
    <property type="entry name" value="PS_II_antenna-like_sf"/>
</dbReference>
<dbReference type="InterPro" id="IPR005869">
    <property type="entry name" value="PSII_PsbC"/>
</dbReference>
<dbReference type="InterPro" id="IPR044900">
    <property type="entry name" value="PSII_PsbC_sf"/>
</dbReference>
<dbReference type="NCBIfam" id="TIGR01153">
    <property type="entry name" value="psbC"/>
    <property type="match status" value="1"/>
</dbReference>
<dbReference type="Pfam" id="PF00421">
    <property type="entry name" value="PSII"/>
    <property type="match status" value="1"/>
</dbReference>
<dbReference type="SUPFAM" id="SSF161077">
    <property type="entry name" value="Photosystem II antenna protein-like"/>
    <property type="match status" value="1"/>
</dbReference>
<keyword id="KW-0007">Acetylation</keyword>
<keyword id="KW-0148">Chlorophyll</keyword>
<keyword id="KW-0150">Chloroplast</keyword>
<keyword id="KW-0157">Chromophore</keyword>
<keyword id="KW-0464">Manganese</keyword>
<keyword id="KW-0472">Membrane</keyword>
<keyword id="KW-0479">Metal-binding</keyword>
<keyword id="KW-0597">Phosphoprotein</keyword>
<keyword id="KW-0602">Photosynthesis</keyword>
<keyword id="KW-0604">Photosystem II</keyword>
<keyword id="KW-0934">Plastid</keyword>
<keyword id="KW-0793">Thylakoid</keyword>
<keyword id="KW-0812">Transmembrane</keyword>
<keyword id="KW-1133">Transmembrane helix</keyword>
<geneLocation type="chloroplast"/>
<sequence length="473" mass="51882">MKTLYSLRRFYHVETLFNGTLALAGRDQETTGFAWWAGNARLINLSGKLLGAHVAHAGLIVFWAGAMNLFEVAHFVPEKPMYEQGLILLPHLATLGWGIGPGGEVIDTFPYFVSGVLHVISSAVLGFGGIYHALLGPETLEESFPFFGYVWKDRNKMTTILGIHLILLGVGAFLLVFKALYFGGVYDTWAPGGGDVRKITNLTLSPSVIFGYLLKSPFGGEGWIVSVDDLEDIIGGHVWLGSICIFGGIWHILTKPFAWARRALVWSGEAYLSYSLAALSVCGFIACCFVWFNNTAYPSEFYGPTGPEASQAQAFTFLVRDQRLGANVGSAQGPTGLGKYLMRSPTGEVIFGGETMRFWDLRAPWLEPLRGPNGLDLSRLKKDIQPWQERRSAEYMTHAPLGSLNSVGGVATEINAVNYVSPRSWLSTSHFVLAFFLFVGHLWHAGRARAAAAGFEKGIDRDFEPVLSMTPLN</sequence>